<dbReference type="EC" id="4.1.1.31"/>
<dbReference type="EMBL" id="D89668">
    <property type="protein sequence ID" value="BAA21835.1"/>
    <property type="molecule type" value="Genomic_DNA"/>
</dbReference>
<dbReference type="EMBL" id="BX572598">
    <property type="protein sequence ID" value="CAE27213.1"/>
    <property type="molecule type" value="Genomic_DNA"/>
</dbReference>
<dbReference type="RefSeq" id="WP_011157278.1">
    <property type="nucleotide sequence ID" value="NZ_CP116810.1"/>
</dbReference>
<dbReference type="SMR" id="O32483"/>
<dbReference type="STRING" id="258594.RPA1772"/>
<dbReference type="GeneID" id="66892807"/>
<dbReference type="eggNOG" id="COG2352">
    <property type="taxonomic scope" value="Bacteria"/>
</dbReference>
<dbReference type="HOGENOM" id="CLU_006557_2_0_5"/>
<dbReference type="PhylomeDB" id="O32483"/>
<dbReference type="GO" id="GO:0005829">
    <property type="term" value="C:cytosol"/>
    <property type="evidence" value="ECO:0007669"/>
    <property type="project" value="TreeGrafter"/>
</dbReference>
<dbReference type="GO" id="GO:0000287">
    <property type="term" value="F:magnesium ion binding"/>
    <property type="evidence" value="ECO:0007669"/>
    <property type="project" value="UniProtKB-UniRule"/>
</dbReference>
<dbReference type="GO" id="GO:0008964">
    <property type="term" value="F:phosphoenolpyruvate carboxylase activity"/>
    <property type="evidence" value="ECO:0007669"/>
    <property type="project" value="UniProtKB-UniRule"/>
</dbReference>
<dbReference type="GO" id="GO:0015977">
    <property type="term" value="P:carbon fixation"/>
    <property type="evidence" value="ECO:0007669"/>
    <property type="project" value="UniProtKB-UniRule"/>
</dbReference>
<dbReference type="GO" id="GO:0006107">
    <property type="term" value="P:oxaloacetate metabolic process"/>
    <property type="evidence" value="ECO:0007669"/>
    <property type="project" value="UniProtKB-UniRule"/>
</dbReference>
<dbReference type="GO" id="GO:0006099">
    <property type="term" value="P:tricarboxylic acid cycle"/>
    <property type="evidence" value="ECO:0007669"/>
    <property type="project" value="InterPro"/>
</dbReference>
<dbReference type="Gene3D" id="1.20.1440.90">
    <property type="entry name" value="Phosphoenolpyruvate/pyruvate domain"/>
    <property type="match status" value="1"/>
</dbReference>
<dbReference type="HAMAP" id="MF_00595">
    <property type="entry name" value="PEPcase_type1"/>
    <property type="match status" value="1"/>
</dbReference>
<dbReference type="InterPro" id="IPR021135">
    <property type="entry name" value="PEP_COase"/>
</dbReference>
<dbReference type="InterPro" id="IPR022805">
    <property type="entry name" value="PEP_COase_bac/pln-type"/>
</dbReference>
<dbReference type="InterPro" id="IPR018129">
    <property type="entry name" value="PEP_COase_Lys_AS"/>
</dbReference>
<dbReference type="InterPro" id="IPR033129">
    <property type="entry name" value="PEPCASE_His_AS"/>
</dbReference>
<dbReference type="InterPro" id="IPR015813">
    <property type="entry name" value="Pyrv/PenolPyrv_kinase-like_dom"/>
</dbReference>
<dbReference type="NCBIfam" id="NF000584">
    <property type="entry name" value="PRK00009.1"/>
    <property type="match status" value="1"/>
</dbReference>
<dbReference type="PANTHER" id="PTHR30523">
    <property type="entry name" value="PHOSPHOENOLPYRUVATE CARBOXYLASE"/>
    <property type="match status" value="1"/>
</dbReference>
<dbReference type="PANTHER" id="PTHR30523:SF6">
    <property type="entry name" value="PHOSPHOENOLPYRUVATE CARBOXYLASE"/>
    <property type="match status" value="1"/>
</dbReference>
<dbReference type="Pfam" id="PF00311">
    <property type="entry name" value="PEPcase"/>
    <property type="match status" value="1"/>
</dbReference>
<dbReference type="PRINTS" id="PR00150">
    <property type="entry name" value="PEPCARBXLASE"/>
</dbReference>
<dbReference type="SUPFAM" id="SSF51621">
    <property type="entry name" value="Phosphoenolpyruvate/pyruvate domain"/>
    <property type="match status" value="1"/>
</dbReference>
<dbReference type="PROSITE" id="PS00781">
    <property type="entry name" value="PEPCASE_1"/>
    <property type="match status" value="1"/>
</dbReference>
<dbReference type="PROSITE" id="PS00393">
    <property type="entry name" value="PEPCASE_2"/>
    <property type="match status" value="1"/>
</dbReference>
<keyword id="KW-0120">Carbon dioxide fixation</keyword>
<keyword id="KW-0456">Lyase</keyword>
<keyword id="KW-0460">Magnesium</keyword>
<protein>
    <recommendedName>
        <fullName>Phosphoenolpyruvate carboxylase</fullName>
        <shortName>PEPC</shortName>
        <shortName>PEPCase</shortName>
        <ecNumber>4.1.1.31</ecNumber>
    </recommendedName>
</protein>
<name>CAPP_RHOPA</name>
<comment type="function">
    <text>Forms oxaloacetate, a four-carbon dicarboxylic acid source for the tricarboxylic acid cycle.</text>
</comment>
<comment type="catalytic activity">
    <reaction>
        <text>oxaloacetate + phosphate = phosphoenolpyruvate + hydrogencarbonate</text>
        <dbReference type="Rhea" id="RHEA:28370"/>
        <dbReference type="ChEBI" id="CHEBI:16452"/>
        <dbReference type="ChEBI" id="CHEBI:17544"/>
        <dbReference type="ChEBI" id="CHEBI:43474"/>
        <dbReference type="ChEBI" id="CHEBI:58702"/>
        <dbReference type="EC" id="4.1.1.31"/>
    </reaction>
</comment>
<comment type="cofactor">
    <cofactor evidence="1">
        <name>Mg(2+)</name>
        <dbReference type="ChEBI" id="CHEBI:18420"/>
    </cofactor>
</comment>
<comment type="similarity">
    <text evidence="3">Belongs to the PEPCase type 1 family.</text>
</comment>
<reference key="1">
    <citation type="journal article" date="1997" name="J. Bacteriol.">
        <title>Structural and functional analysis of the phosphoenolpyruvate carboxylase gene from the purple nonsulfur bacterium Rhodopseudomonas palustris No. 7.</title>
        <authorList>
            <person name="Inui M."/>
            <person name="Dumay V."/>
            <person name="Zahn K."/>
            <person name="Yamagata H."/>
            <person name="Yukawa H."/>
        </authorList>
    </citation>
    <scope>NUCLEOTIDE SEQUENCE [GENOMIC DNA]</scope>
    <source>
        <strain>7</strain>
    </source>
</reference>
<reference key="2">
    <citation type="journal article" date="2004" name="Nat. Biotechnol.">
        <title>Complete genome sequence of the metabolically versatile photosynthetic bacterium Rhodopseudomonas palustris.</title>
        <authorList>
            <person name="Larimer F.W."/>
            <person name="Chain P."/>
            <person name="Hauser L."/>
            <person name="Lamerdin J.E."/>
            <person name="Malfatti S."/>
            <person name="Do L."/>
            <person name="Land M.L."/>
            <person name="Pelletier D.A."/>
            <person name="Beatty J.T."/>
            <person name="Lang A.S."/>
            <person name="Tabita F.R."/>
            <person name="Gibson J.L."/>
            <person name="Hanson T.E."/>
            <person name="Bobst C."/>
            <person name="Torres y Torres J.L."/>
            <person name="Peres C."/>
            <person name="Harrison F.H."/>
            <person name="Gibson J."/>
            <person name="Harwood C.S."/>
        </authorList>
    </citation>
    <scope>NUCLEOTIDE SEQUENCE [LARGE SCALE GENOMIC DNA]</scope>
    <source>
        <strain>ATCC BAA-98 / CGA009</strain>
    </source>
</reference>
<gene>
    <name type="primary">ppc</name>
    <name type="ordered locus">RPA1772</name>
</gene>
<organism>
    <name type="scientific">Rhodopseudomonas palustris (strain ATCC BAA-98 / CGA009)</name>
    <dbReference type="NCBI Taxonomy" id="258594"/>
    <lineage>
        <taxon>Bacteria</taxon>
        <taxon>Pseudomonadati</taxon>
        <taxon>Pseudomonadota</taxon>
        <taxon>Alphaproteobacteria</taxon>
        <taxon>Hyphomicrobiales</taxon>
        <taxon>Nitrobacteraceae</taxon>
        <taxon>Rhodopseudomonas</taxon>
    </lineage>
</organism>
<evidence type="ECO:0000250" key="1"/>
<evidence type="ECO:0000256" key="2">
    <source>
        <dbReference type="SAM" id="MobiDB-lite"/>
    </source>
</evidence>
<evidence type="ECO:0000305" key="3"/>
<feature type="chain" id="PRO_0000166618" description="Phosphoenolpyruvate carboxylase">
    <location>
        <begin position="1"/>
        <end position="936"/>
    </location>
</feature>
<feature type="region of interest" description="Disordered" evidence="2">
    <location>
        <begin position="1"/>
        <end position="20"/>
    </location>
</feature>
<feature type="active site" evidence="1">
    <location>
        <position position="164"/>
    </location>
</feature>
<feature type="active site" evidence="1">
    <location>
        <position position="598"/>
    </location>
</feature>
<feature type="sequence conflict" description="In Ref. 1; BAA21835." evidence="3" ref="1">
    <original>S</original>
    <variation>T</variation>
    <location>
        <position position="51"/>
    </location>
</feature>
<feature type="sequence conflict" description="In Ref. 1; BAA21835." evidence="3" ref="1">
    <original>A</original>
    <variation>E</variation>
    <location>
        <position position="79"/>
    </location>
</feature>
<feature type="sequence conflict" description="In Ref. 1; BAA21835." evidence="3" ref="1">
    <original>Q</original>
    <variation>P</variation>
    <location>
        <position position="88"/>
    </location>
</feature>
<feature type="sequence conflict" description="In Ref. 1; BAA21835." evidence="3" ref="1">
    <original>G</original>
    <variation>S</variation>
    <location>
        <position position="182"/>
    </location>
</feature>
<feature type="sequence conflict" description="In Ref. 1; BAA21835." evidence="3" ref="1">
    <original>T</original>
    <variation>A</variation>
    <location>
        <position position="198"/>
    </location>
</feature>
<feature type="sequence conflict" description="In Ref. 1; BAA21835." evidence="3" ref="1">
    <original>ANAE</original>
    <variation>VNSD</variation>
    <location>
        <begin position="263"/>
        <end position="266"/>
    </location>
</feature>
<feature type="sequence conflict" description="In Ref. 1; BAA21835." evidence="3" ref="1">
    <original>E</original>
    <variation>D</variation>
    <location>
        <position position="311"/>
    </location>
</feature>
<feature type="sequence conflict" description="In Ref. 1; BAA21835." evidence="3" ref="1">
    <original>THH</original>
    <variation>QHN</variation>
    <location>
        <begin position="404"/>
        <end position="406"/>
    </location>
</feature>
<feature type="sequence conflict" description="In Ref. 1; BAA21835." evidence="3" ref="1">
    <original>G</original>
    <variation>T</variation>
    <location>
        <position position="446"/>
    </location>
</feature>
<feature type="sequence conflict" description="In Ref. 1; BAA21835." evidence="3" ref="1">
    <original>V</original>
    <variation>M</variation>
    <location>
        <position position="460"/>
    </location>
</feature>
<feature type="sequence conflict" description="In Ref. 1; BAA21835." evidence="3" ref="1">
    <original>D</original>
    <variation>E</variation>
    <location>
        <position position="464"/>
    </location>
</feature>
<feature type="sequence conflict" description="In Ref. 1; BAA21835." evidence="3" ref="1">
    <original>L</original>
    <variation>V</variation>
    <location>
        <position position="530"/>
    </location>
</feature>
<feature type="sequence conflict" description="In Ref. 1; BAA21835." evidence="3" ref="1">
    <original>S</original>
    <variation>R</variation>
    <location>
        <position position="671"/>
    </location>
</feature>
<feature type="sequence conflict" description="In Ref. 1; BAA21835." evidence="3" ref="1">
    <original>E</original>
    <variation>A</variation>
    <location>
        <position position="798"/>
    </location>
</feature>
<feature type="sequence conflict" description="In Ref. 1; BAA21835." evidence="3" ref="1">
    <original>K</original>
    <variation>T</variation>
    <location>
        <position position="802"/>
    </location>
</feature>
<feature type="sequence conflict" description="In Ref. 1; BAA21835." evidence="3" ref="1">
    <original>A</original>
    <variation>K</variation>
    <location>
        <position position="809"/>
    </location>
</feature>
<feature type="sequence conflict" description="In Ref. 1; BAA21835." evidence="3" ref="1">
    <original>TAIRD</original>
    <variation>VDVRE</variation>
    <location>
        <begin position="846"/>
        <end position="850"/>
    </location>
</feature>
<feature type="sequence conflict" description="In Ref. 1; BAA21835." evidence="3" ref="1">
    <original>S</original>
    <variation>G</variation>
    <location>
        <position position="854"/>
    </location>
</feature>
<feature type="sequence conflict" description="In Ref. 1; BAA21835." evidence="3" ref="1">
    <original>D</original>
    <variation>E</variation>
    <location>
        <position position="865"/>
    </location>
</feature>
<feature type="sequence conflict" description="In Ref. 1; BAA21835." evidence="3" ref="1">
    <original>L</original>
    <variation>F</variation>
    <location>
        <position position="868"/>
    </location>
</feature>
<feature type="sequence conflict" description="In Ref. 1; BAA21835." evidence="3" ref="1">
    <original>H</original>
    <variation>R</variation>
    <location>
        <position position="875"/>
    </location>
</feature>
<sequence length="936" mass="104139">MSSLNLSAGPEPVSERPDDAAAIEAETRLRNDIRLLGRILGDTVREQEGQSVFDLVENIRQTSIRFHRDDDKTARAELAAILDGMSIQDTMRIVRAFSYFSHLANIAEDQNNIRQMRAGSTAGSAPRAGLLAKTLAHARQEGISAAELRKFFATALVSPVLTAHPTEVRRKSTMDREMQIAGLLDQRDRVQLTADEWTDNEERLRRAVETLWKTNLLRRTKLTVLDEVTNGLSFYDYTFLREVPRLHSALEDRLADAAKAEGANAEGELASFLRMGSWIGGDRDGNPFVTAEVLHGTLKLQSTRVLRYYLEELHELGSELSLASHLAGTTDTVKALAETSPDTSPHRKYEPYRLAVSGIYARLAATALKLEVENLRAPVGEAEPYASAQDFKADLDAIHLSLTTHHSGVIARGRLRQLRRAIDCFGFHLASLDMRQNSAVHERTIGELMDAARPGTSYAVLDEDARIALLISELRSTRPLTSMFVKYSDETVGELAVFREAAKAHATYGAAAIPQCIISMTKGVSDLLELAVLLKEVGLIDPSGRSAINVVPLFETIEDLQACAKIMDRLLSIPEYRRLVDSRGSVQEVMLGYSDSNKDGGFVTSGWELYKAEIGLIEIFEHHGVRLRLFHGRGGSVGRGGGPSYDAIVAQPGGAVNGQIRITEQGEIITSKYSNVEVGRNNLEILAAATLEASLLQPKRVAPHRDYLEAMEQLSALAFKAYRGLVYETDGFVDYFWASTVINEISTLNIGSRPASRKKTRAIEDLRAIPWVFSWAQCRLMLPGWYGFGSAVSAWVTEHPEKGIAFLQAMYQEWPFFRTLLSNMDMVLSKSSIGIASRYAELVEDTAIRDRIFSRIRAEWHSSIDYLLAIMQQDHLLQSNPLLERSIRHRFPYLDPLNHVQVQLLREHRTHDPDEQVLRGVQLTINGISAGLRNSG</sequence>
<proteinExistence type="inferred from homology"/>
<accession>O32483</accession>